<dbReference type="EMBL" id="AE017333">
    <property type="protein sequence ID" value="AAU40768.1"/>
    <property type="molecule type" value="Genomic_DNA"/>
</dbReference>
<dbReference type="EMBL" id="CP000002">
    <property type="protein sequence ID" value="AAU23408.2"/>
    <property type="molecule type" value="Genomic_DNA"/>
</dbReference>
<dbReference type="SMR" id="Q65JJ6"/>
<dbReference type="STRING" id="279010.BL01240"/>
<dbReference type="KEGG" id="bld:BLi01873"/>
<dbReference type="KEGG" id="bli:BL01240"/>
<dbReference type="eggNOG" id="COG0233">
    <property type="taxonomic scope" value="Bacteria"/>
</dbReference>
<dbReference type="HOGENOM" id="CLU_073981_2_0_9"/>
<dbReference type="Proteomes" id="UP000000606">
    <property type="component" value="Chromosome"/>
</dbReference>
<dbReference type="GO" id="GO:0005737">
    <property type="term" value="C:cytoplasm"/>
    <property type="evidence" value="ECO:0007669"/>
    <property type="project" value="UniProtKB-SubCell"/>
</dbReference>
<dbReference type="GO" id="GO:0043023">
    <property type="term" value="F:ribosomal large subunit binding"/>
    <property type="evidence" value="ECO:0007669"/>
    <property type="project" value="TreeGrafter"/>
</dbReference>
<dbReference type="GO" id="GO:0006415">
    <property type="term" value="P:translational termination"/>
    <property type="evidence" value="ECO:0007669"/>
    <property type="project" value="UniProtKB-UniRule"/>
</dbReference>
<dbReference type="CDD" id="cd00520">
    <property type="entry name" value="RRF"/>
    <property type="match status" value="1"/>
</dbReference>
<dbReference type="FunFam" id="1.10.132.20:FF:000001">
    <property type="entry name" value="Ribosome-recycling factor"/>
    <property type="match status" value="1"/>
</dbReference>
<dbReference type="FunFam" id="3.30.1360.40:FF:000001">
    <property type="entry name" value="Ribosome-recycling factor"/>
    <property type="match status" value="1"/>
</dbReference>
<dbReference type="Gene3D" id="3.30.1360.40">
    <property type="match status" value="1"/>
</dbReference>
<dbReference type="Gene3D" id="1.10.132.20">
    <property type="entry name" value="Ribosome-recycling factor"/>
    <property type="match status" value="1"/>
</dbReference>
<dbReference type="HAMAP" id="MF_00040">
    <property type="entry name" value="RRF"/>
    <property type="match status" value="1"/>
</dbReference>
<dbReference type="InterPro" id="IPR002661">
    <property type="entry name" value="Ribosome_recyc_fac"/>
</dbReference>
<dbReference type="InterPro" id="IPR023584">
    <property type="entry name" value="Ribosome_recyc_fac_dom"/>
</dbReference>
<dbReference type="InterPro" id="IPR036191">
    <property type="entry name" value="RRF_sf"/>
</dbReference>
<dbReference type="NCBIfam" id="TIGR00496">
    <property type="entry name" value="frr"/>
    <property type="match status" value="1"/>
</dbReference>
<dbReference type="PANTHER" id="PTHR20982:SF3">
    <property type="entry name" value="MITOCHONDRIAL RIBOSOME RECYCLING FACTOR PSEUDO 1"/>
    <property type="match status" value="1"/>
</dbReference>
<dbReference type="PANTHER" id="PTHR20982">
    <property type="entry name" value="RIBOSOME RECYCLING FACTOR"/>
    <property type="match status" value="1"/>
</dbReference>
<dbReference type="Pfam" id="PF01765">
    <property type="entry name" value="RRF"/>
    <property type="match status" value="1"/>
</dbReference>
<dbReference type="SUPFAM" id="SSF55194">
    <property type="entry name" value="Ribosome recycling factor, RRF"/>
    <property type="match status" value="1"/>
</dbReference>
<protein>
    <recommendedName>
        <fullName evidence="1">Ribosome-recycling factor</fullName>
        <shortName evidence="1">RRF</shortName>
    </recommendedName>
    <alternativeName>
        <fullName evidence="1">Ribosome-releasing factor</fullName>
    </alternativeName>
</protein>
<evidence type="ECO:0000255" key="1">
    <source>
        <dbReference type="HAMAP-Rule" id="MF_00040"/>
    </source>
</evidence>
<organism>
    <name type="scientific">Bacillus licheniformis (strain ATCC 14580 / DSM 13 / JCM 2505 / CCUG 7422 / NBRC 12200 / NCIMB 9375 / NCTC 10341 / NRRL NRS-1264 / Gibson 46)</name>
    <dbReference type="NCBI Taxonomy" id="279010"/>
    <lineage>
        <taxon>Bacteria</taxon>
        <taxon>Bacillati</taxon>
        <taxon>Bacillota</taxon>
        <taxon>Bacilli</taxon>
        <taxon>Bacillales</taxon>
        <taxon>Bacillaceae</taxon>
        <taxon>Bacillus</taxon>
    </lineage>
</organism>
<gene>
    <name evidence="1" type="primary">frr</name>
    <name type="ordered locus">BLi01873</name>
    <name type="ordered locus">BL01240</name>
</gene>
<feature type="chain" id="PRO_0000167410" description="Ribosome-recycling factor">
    <location>
        <begin position="1"/>
        <end position="185"/>
    </location>
</feature>
<proteinExistence type="inferred from homology"/>
<keyword id="KW-0963">Cytoplasm</keyword>
<keyword id="KW-0648">Protein biosynthesis</keyword>
<keyword id="KW-1185">Reference proteome</keyword>
<sequence length="185" mass="20913">MSTQVMNETKERMQKAISAYQRELATVRAGRANPSLLDKVAVEYYGAQTPLNQIASITVPEARMLVITPYDKTALGDIEKAIQKADLGVTPSNDGNIIRITIPPLTEERRKELAKLVKKYSEDAKVAVRNIRRDANDDLKKLEKNGEMTEDELRSSTEDVQKLTDEYVSKIDEITKDKEKEIMEV</sequence>
<accession>Q65JJ6</accession>
<accession>Q62V01</accession>
<comment type="function">
    <text evidence="1">Responsible for the release of ribosomes from messenger RNA at the termination of protein biosynthesis. May increase the efficiency of translation by recycling ribosomes from one round of translation to another.</text>
</comment>
<comment type="subcellular location">
    <subcellularLocation>
        <location evidence="1">Cytoplasm</location>
    </subcellularLocation>
</comment>
<comment type="similarity">
    <text evidence="1">Belongs to the RRF family.</text>
</comment>
<reference key="1">
    <citation type="journal article" date="2004" name="J. Mol. Microbiol. Biotechnol.">
        <title>The complete genome sequence of Bacillus licheniformis DSM13, an organism with great industrial potential.</title>
        <authorList>
            <person name="Veith B."/>
            <person name="Herzberg C."/>
            <person name="Steckel S."/>
            <person name="Feesche J."/>
            <person name="Maurer K.H."/>
            <person name="Ehrenreich P."/>
            <person name="Baeumer S."/>
            <person name="Henne A."/>
            <person name="Liesegang H."/>
            <person name="Merkl R."/>
            <person name="Ehrenreich A."/>
            <person name="Gottschalk G."/>
        </authorList>
    </citation>
    <scope>NUCLEOTIDE SEQUENCE [LARGE SCALE GENOMIC DNA]</scope>
    <source>
        <strain>ATCC 14580 / DSM 13 / JCM 2505 / CCUG 7422 / NBRC 12200 / NCIMB 9375 / NCTC 10341 / NRRL NRS-1264 / Gibson 46</strain>
    </source>
</reference>
<reference key="2">
    <citation type="journal article" date="2004" name="Genome Biol.">
        <title>Complete genome sequence of the industrial bacterium Bacillus licheniformis and comparisons with closely related Bacillus species.</title>
        <authorList>
            <person name="Rey M.W."/>
            <person name="Ramaiya P."/>
            <person name="Nelson B.A."/>
            <person name="Brody-Karpin S.D."/>
            <person name="Zaretsky E.J."/>
            <person name="Tang M."/>
            <person name="Lopez de Leon A."/>
            <person name="Xiang H."/>
            <person name="Gusti V."/>
            <person name="Clausen I.G."/>
            <person name="Olsen P.B."/>
            <person name="Rasmussen M.D."/>
            <person name="Andersen J.T."/>
            <person name="Joergensen P.L."/>
            <person name="Larsen T.S."/>
            <person name="Sorokin A."/>
            <person name="Bolotin A."/>
            <person name="Lapidus A."/>
            <person name="Galleron N."/>
            <person name="Ehrlich S.D."/>
            <person name="Berka R.M."/>
        </authorList>
    </citation>
    <scope>NUCLEOTIDE SEQUENCE [LARGE SCALE GENOMIC DNA]</scope>
    <source>
        <strain>ATCC 14580 / DSM 13 / JCM 2505 / CCUG 7422 / NBRC 12200 / NCIMB 9375 / NCTC 10341 / NRRL NRS-1264 / Gibson 46</strain>
    </source>
</reference>
<name>RRF_BACLD</name>